<sequence>MDPGRVVFDSGVARRACPGGAQMLLFGGGGSANSGGFFRGVPAAVLGMDESRSSSSAAGAGAKRPFFTTHEELLEEEYYDEQAPEKKRRLTAEQVQMLERSFEEENKLEPERKTELARRLGMAPRQVAVWFQNRRARWKTKQLEHDFDRLKAAYDALAADHHALLSDNDRLRAQVISLTEKLQDKETSPSSATITTAAQEVDQPDEHTEAASTTGFATVDGALAAPPPGHQQPPHKDDLVSSGGTNDDGDGGGAAVVVFDVTEGANDRLSCESAYFADAAEAYERDCAGHYALSSEEEDGGAVSDEGCSFDLPDAAAAAAAMFGAAGVVHHDAADDEEAQLGSWTAWFWS</sequence>
<feature type="chain" id="PRO_0000331682" description="Homeobox-leucine zipper protein HOX5">
    <location>
        <begin position="1"/>
        <end position="350"/>
    </location>
</feature>
<feature type="DNA-binding region" description="Homeobox" evidence="1">
    <location>
        <begin position="83"/>
        <end position="142"/>
    </location>
</feature>
<feature type="region of interest" description="Leucine-zipper">
    <location>
        <begin position="141"/>
        <end position="185"/>
    </location>
</feature>
<feature type="region of interest" description="Disordered" evidence="2">
    <location>
        <begin position="180"/>
        <end position="254"/>
    </location>
</feature>
<feature type="compositionally biased region" description="Low complexity" evidence="2">
    <location>
        <begin position="188"/>
        <end position="198"/>
    </location>
</feature>
<comment type="function">
    <text evidence="3">Probable transcription activator that binds to the DNA sequence 5'-CAAT[AT]ATTG-3'.</text>
</comment>
<comment type="subunit">
    <text evidence="3 5">Homodimer (Probable). May form a heterodimer with HOX4.</text>
</comment>
<comment type="subcellular location">
    <subcellularLocation>
        <location evidence="5">Nucleus</location>
    </subcellularLocation>
</comment>
<comment type="tissue specificity">
    <text evidence="3 4">Expressed in seedlings, roots, leaves, nodes, internodes, flowers and embryo.</text>
</comment>
<comment type="similarity">
    <text evidence="5">Belongs to the HD-ZIP homeobox family. Class I subfamily.</text>
</comment>
<accession>Q9XH36</accession>
<accession>A2YV84</accession>
<accession>A5JPU2</accession>
<evidence type="ECO:0000255" key="1">
    <source>
        <dbReference type="PROSITE-ProRule" id="PRU00108"/>
    </source>
</evidence>
<evidence type="ECO:0000256" key="2">
    <source>
        <dbReference type="SAM" id="MobiDB-lite"/>
    </source>
</evidence>
<evidence type="ECO:0000269" key="3">
    <source>
    </source>
</evidence>
<evidence type="ECO:0000269" key="4">
    <source>
    </source>
</evidence>
<evidence type="ECO:0000305" key="5"/>
<keyword id="KW-0010">Activator</keyword>
<keyword id="KW-0238">DNA-binding</keyword>
<keyword id="KW-0371">Homeobox</keyword>
<keyword id="KW-0539">Nucleus</keyword>
<keyword id="KW-1185">Reference proteome</keyword>
<keyword id="KW-0804">Transcription</keyword>
<keyword id="KW-0805">Transcription regulation</keyword>
<protein>
    <recommendedName>
        <fullName>Homeobox-leucine zipper protein HOX5</fullName>
    </recommendedName>
    <alternativeName>
        <fullName>HD-ZIP protein HOX5</fullName>
    </alternativeName>
    <alternativeName>
        <fullName>Homeodomain transcription factor HOX5</fullName>
    </alternativeName>
    <alternativeName>
        <fullName>OsHox5</fullName>
    </alternativeName>
</protein>
<dbReference type="EMBL" id="AF145729">
    <property type="protein sequence ID" value="AAD37698.1"/>
    <property type="molecule type" value="mRNA"/>
</dbReference>
<dbReference type="EMBL" id="CM000133">
    <property type="protein sequence ID" value="EAZ06995.1"/>
    <property type="molecule type" value="Genomic_DNA"/>
</dbReference>
<dbReference type="EMBL" id="EF555525">
    <property type="protein sequence ID" value="ABQ57268.1"/>
    <property type="molecule type" value="mRNA"/>
</dbReference>
<dbReference type="SMR" id="Q9XH36"/>
<dbReference type="EnsemblPlants" id="BGIOSGA026973-TA">
    <property type="protein sequence ID" value="BGIOSGA026973-PA"/>
    <property type="gene ID" value="BGIOSGA026973"/>
</dbReference>
<dbReference type="Gramene" id="BGIOSGA026973-TA">
    <property type="protein sequence ID" value="BGIOSGA026973-PA"/>
    <property type="gene ID" value="BGIOSGA026973"/>
</dbReference>
<dbReference type="HOGENOM" id="CLU_060842_2_0_1"/>
<dbReference type="OMA" id="QPDEHTE"/>
<dbReference type="Proteomes" id="UP000007015">
    <property type="component" value="Chromosome 8"/>
</dbReference>
<dbReference type="GO" id="GO:0005634">
    <property type="term" value="C:nucleus"/>
    <property type="evidence" value="ECO:0007669"/>
    <property type="project" value="UniProtKB-SubCell"/>
</dbReference>
<dbReference type="GO" id="GO:0000981">
    <property type="term" value="F:DNA-binding transcription factor activity, RNA polymerase II-specific"/>
    <property type="evidence" value="ECO:0007669"/>
    <property type="project" value="InterPro"/>
</dbReference>
<dbReference type="GO" id="GO:0043565">
    <property type="term" value="F:sequence-specific DNA binding"/>
    <property type="evidence" value="ECO:0007669"/>
    <property type="project" value="InterPro"/>
</dbReference>
<dbReference type="GO" id="GO:0045893">
    <property type="term" value="P:positive regulation of DNA-templated transcription"/>
    <property type="evidence" value="ECO:0007669"/>
    <property type="project" value="TreeGrafter"/>
</dbReference>
<dbReference type="CDD" id="cd00086">
    <property type="entry name" value="homeodomain"/>
    <property type="match status" value="1"/>
</dbReference>
<dbReference type="FunFam" id="1.10.10.60:FF:000159">
    <property type="entry name" value="Homeobox-leucine zipper protein HAT5"/>
    <property type="match status" value="1"/>
</dbReference>
<dbReference type="Gene3D" id="1.10.10.60">
    <property type="entry name" value="Homeodomain-like"/>
    <property type="match status" value="1"/>
</dbReference>
<dbReference type="InterPro" id="IPR001356">
    <property type="entry name" value="HD"/>
</dbReference>
<dbReference type="InterPro" id="IPR045224">
    <property type="entry name" value="HDZip_class_I_plant"/>
</dbReference>
<dbReference type="InterPro" id="IPR017970">
    <property type="entry name" value="Homeobox_CS"/>
</dbReference>
<dbReference type="InterPro" id="IPR009057">
    <property type="entry name" value="Homeodomain-like_sf"/>
</dbReference>
<dbReference type="InterPro" id="IPR000047">
    <property type="entry name" value="HTH_motif"/>
</dbReference>
<dbReference type="InterPro" id="IPR003106">
    <property type="entry name" value="Leu_zip_homeo"/>
</dbReference>
<dbReference type="PANTHER" id="PTHR24326">
    <property type="entry name" value="HOMEOBOX-LEUCINE ZIPPER PROTEIN"/>
    <property type="match status" value="1"/>
</dbReference>
<dbReference type="PANTHER" id="PTHR24326:SF215">
    <property type="entry name" value="HOMEOBOX-LEUCINE ZIPPER PROTEIN HOX5"/>
    <property type="match status" value="1"/>
</dbReference>
<dbReference type="Pfam" id="PF02183">
    <property type="entry name" value="HALZ"/>
    <property type="match status" value="1"/>
</dbReference>
<dbReference type="Pfam" id="PF00046">
    <property type="entry name" value="Homeodomain"/>
    <property type="match status" value="1"/>
</dbReference>
<dbReference type="PRINTS" id="PR00031">
    <property type="entry name" value="HTHREPRESSR"/>
</dbReference>
<dbReference type="SMART" id="SM00389">
    <property type="entry name" value="HOX"/>
    <property type="match status" value="1"/>
</dbReference>
<dbReference type="SUPFAM" id="SSF46689">
    <property type="entry name" value="Homeodomain-like"/>
    <property type="match status" value="1"/>
</dbReference>
<dbReference type="PROSITE" id="PS00027">
    <property type="entry name" value="HOMEOBOX_1"/>
    <property type="match status" value="1"/>
</dbReference>
<dbReference type="PROSITE" id="PS50071">
    <property type="entry name" value="HOMEOBOX_2"/>
    <property type="match status" value="1"/>
</dbReference>
<reference key="1">
    <citation type="journal article" date="2000" name="Mol. Gen. Genet.">
        <title>HD-Zip proteins of families I and II from rice: interactions and functional properties.</title>
        <authorList>
            <person name="Meijer A.H."/>
            <person name="de Kam R.J."/>
            <person name="d'Erfurth I."/>
            <person name="Shen W.-B."/>
            <person name="Hoge J.H.C."/>
        </authorList>
    </citation>
    <scope>NUCLEOTIDE SEQUENCE [MRNA]</scope>
    <scope>FUNCTION</scope>
    <scope>SUBUNIT</scope>
    <scope>TISSUE SPECIFICITY</scope>
    <source>
        <strain>cv. IR58</strain>
        <tissue>Seed embryo</tissue>
    </source>
</reference>
<reference key="2">
    <citation type="journal article" date="2005" name="PLoS Biol.">
        <title>The genomes of Oryza sativa: a history of duplications.</title>
        <authorList>
            <person name="Yu J."/>
            <person name="Wang J."/>
            <person name="Lin W."/>
            <person name="Li S."/>
            <person name="Li H."/>
            <person name="Zhou J."/>
            <person name="Ni P."/>
            <person name="Dong W."/>
            <person name="Hu S."/>
            <person name="Zeng C."/>
            <person name="Zhang J."/>
            <person name="Zhang Y."/>
            <person name="Li R."/>
            <person name="Xu Z."/>
            <person name="Li S."/>
            <person name="Li X."/>
            <person name="Zheng H."/>
            <person name="Cong L."/>
            <person name="Lin L."/>
            <person name="Yin J."/>
            <person name="Geng J."/>
            <person name="Li G."/>
            <person name="Shi J."/>
            <person name="Liu J."/>
            <person name="Lv H."/>
            <person name="Li J."/>
            <person name="Wang J."/>
            <person name="Deng Y."/>
            <person name="Ran L."/>
            <person name="Shi X."/>
            <person name="Wang X."/>
            <person name="Wu Q."/>
            <person name="Li C."/>
            <person name="Ren X."/>
            <person name="Wang J."/>
            <person name="Wang X."/>
            <person name="Li D."/>
            <person name="Liu D."/>
            <person name="Zhang X."/>
            <person name="Ji Z."/>
            <person name="Zhao W."/>
            <person name="Sun Y."/>
            <person name="Zhang Z."/>
            <person name="Bao J."/>
            <person name="Han Y."/>
            <person name="Dong L."/>
            <person name="Ji J."/>
            <person name="Chen P."/>
            <person name="Wu S."/>
            <person name="Liu J."/>
            <person name="Xiao Y."/>
            <person name="Bu D."/>
            <person name="Tan J."/>
            <person name="Yang L."/>
            <person name="Ye C."/>
            <person name="Zhang J."/>
            <person name="Xu J."/>
            <person name="Zhou Y."/>
            <person name="Yu Y."/>
            <person name="Zhang B."/>
            <person name="Zhuang S."/>
            <person name="Wei H."/>
            <person name="Liu B."/>
            <person name="Lei M."/>
            <person name="Yu H."/>
            <person name="Li Y."/>
            <person name="Xu H."/>
            <person name="Wei S."/>
            <person name="He X."/>
            <person name="Fang L."/>
            <person name="Zhang Z."/>
            <person name="Zhang Y."/>
            <person name="Huang X."/>
            <person name="Su Z."/>
            <person name="Tong W."/>
            <person name="Li J."/>
            <person name="Tong Z."/>
            <person name="Li S."/>
            <person name="Ye J."/>
            <person name="Wang L."/>
            <person name="Fang L."/>
            <person name="Lei T."/>
            <person name="Chen C.-S."/>
            <person name="Chen H.-C."/>
            <person name="Xu Z."/>
            <person name="Li H."/>
            <person name="Huang H."/>
            <person name="Zhang F."/>
            <person name="Xu H."/>
            <person name="Li N."/>
            <person name="Zhao C."/>
            <person name="Li S."/>
            <person name="Dong L."/>
            <person name="Huang Y."/>
            <person name="Li L."/>
            <person name="Xi Y."/>
            <person name="Qi Q."/>
            <person name="Li W."/>
            <person name="Zhang B."/>
            <person name="Hu W."/>
            <person name="Zhang Y."/>
            <person name="Tian X."/>
            <person name="Jiao Y."/>
            <person name="Liang X."/>
            <person name="Jin J."/>
            <person name="Gao L."/>
            <person name="Zheng W."/>
            <person name="Hao B."/>
            <person name="Liu S.-M."/>
            <person name="Wang W."/>
            <person name="Yuan L."/>
            <person name="Cao M."/>
            <person name="McDermott J."/>
            <person name="Samudrala R."/>
            <person name="Wang J."/>
            <person name="Wong G.K.-S."/>
            <person name="Yang H."/>
        </authorList>
    </citation>
    <scope>NUCLEOTIDE SEQUENCE [LARGE SCALE GENOMIC DNA]</scope>
    <source>
        <strain>cv. 93-11</strain>
    </source>
</reference>
<reference key="3">
    <citation type="journal article" date="2008" name="Plant Mol. Biol.">
        <title>A genome-wide survey of HD-Zip genes in rice and analysis of drought-responsive family members.</title>
        <authorList>
            <person name="Agalou A."/>
            <person name="Purwantomo S."/>
            <person name="Oevernaes E."/>
            <person name="Johannesson H."/>
            <person name="Zhu X."/>
            <person name="Estiati A."/>
            <person name="de Kam R.J."/>
            <person name="Engstroem P."/>
            <person name="Slamet-Loedin I.H."/>
            <person name="Zhu Z."/>
            <person name="Wang M."/>
            <person name="Xiong L."/>
            <person name="Meijer A.H."/>
            <person name="Ouwerkerk P.B.F."/>
        </authorList>
    </citation>
    <scope>NUCLEOTIDE SEQUENCE [MRNA] OF 1-132</scope>
    <scope>TISSUE SPECIFICITY</scope>
    <scope>GENE FAMILY</scope>
    <scope>NOMENCLATURE</scope>
    <source>
        <strain>cv. Minghui 86</strain>
    </source>
</reference>
<organism>
    <name type="scientific">Oryza sativa subsp. indica</name>
    <name type="common">Rice</name>
    <dbReference type="NCBI Taxonomy" id="39946"/>
    <lineage>
        <taxon>Eukaryota</taxon>
        <taxon>Viridiplantae</taxon>
        <taxon>Streptophyta</taxon>
        <taxon>Embryophyta</taxon>
        <taxon>Tracheophyta</taxon>
        <taxon>Spermatophyta</taxon>
        <taxon>Magnoliopsida</taxon>
        <taxon>Liliopsida</taxon>
        <taxon>Poales</taxon>
        <taxon>Poaceae</taxon>
        <taxon>BOP clade</taxon>
        <taxon>Oryzoideae</taxon>
        <taxon>Oryzeae</taxon>
        <taxon>Oryzinae</taxon>
        <taxon>Oryza</taxon>
        <taxon>Oryza sativa</taxon>
    </lineage>
</organism>
<gene>
    <name type="primary">HOX5</name>
    <name type="ORF">OsI_028227</name>
</gene>
<proteinExistence type="evidence at protein level"/>
<name>HOX5_ORYSI</name>